<comment type="function">
    <text evidence="1">One of the primary rRNA binding proteins, it binds directly to 16S rRNA central domain where it helps coordinate assembly of the platform of the 30S subunit.</text>
</comment>
<comment type="subunit">
    <text evidence="1">Part of the 30S ribosomal subunit.</text>
</comment>
<comment type="similarity">
    <text evidence="1">Belongs to the universal ribosomal protein uS8 family.</text>
</comment>
<feature type="chain" id="PRO_0000126552" description="Small ribosomal subunit protein uS8">
    <location>
        <begin position="1"/>
        <end position="133"/>
    </location>
</feature>
<dbReference type="EMBL" id="Y07778">
    <property type="protein sequence ID" value="CAA69092.1"/>
    <property type="molecule type" value="Genomic_DNA"/>
</dbReference>
<dbReference type="EMBL" id="CP000077">
    <property type="protein sequence ID" value="AAY79974.1"/>
    <property type="molecule type" value="Genomic_DNA"/>
</dbReference>
<dbReference type="RefSeq" id="WP_011277476.1">
    <property type="nucleotide sequence ID" value="NC_007181.1"/>
</dbReference>
<dbReference type="PDB" id="8HKX">
    <property type="method" value="EM"/>
    <property type="resolution" value="3.14 A"/>
    <property type="chains" value="AS8P=4-133"/>
</dbReference>
<dbReference type="PDB" id="8HKY">
    <property type="method" value="EM"/>
    <property type="resolution" value="4.45 A"/>
    <property type="chains" value="AS8P=4-133"/>
</dbReference>
<dbReference type="PDB" id="8HKZ">
    <property type="method" value="EM"/>
    <property type="resolution" value="4.78 A"/>
    <property type="chains" value="AS8P=4-133"/>
</dbReference>
<dbReference type="PDB" id="8HL1">
    <property type="method" value="EM"/>
    <property type="resolution" value="3.93 A"/>
    <property type="chains" value="AS8P=4-133"/>
</dbReference>
<dbReference type="PDB" id="8HL2">
    <property type="method" value="EM"/>
    <property type="resolution" value="4.10 A"/>
    <property type="chains" value="AS8P=4-133"/>
</dbReference>
<dbReference type="PDB" id="8HL3">
    <property type="method" value="EM"/>
    <property type="resolution" value="4.80 A"/>
    <property type="chains" value="AS8P=4-133"/>
</dbReference>
<dbReference type="PDB" id="8HL4">
    <property type="method" value="EM"/>
    <property type="resolution" value="4.62 A"/>
    <property type="chains" value="AS8P=4-133"/>
</dbReference>
<dbReference type="PDB" id="8HL5">
    <property type="method" value="EM"/>
    <property type="resolution" value="5.72 A"/>
    <property type="chains" value="AS8P=4-133"/>
</dbReference>
<dbReference type="PDB" id="8WKP">
    <property type="method" value="EM"/>
    <property type="resolution" value="4.62 A"/>
    <property type="chains" value="AS8P=4-133"/>
</dbReference>
<dbReference type="PDB" id="8WQ2">
    <property type="method" value="EM"/>
    <property type="resolution" value="4.10 A"/>
    <property type="chains" value="AS8P=4-133"/>
</dbReference>
<dbReference type="PDB" id="8WQ4">
    <property type="method" value="EM"/>
    <property type="resolution" value="4.53 A"/>
    <property type="chains" value="AS8P=4-133"/>
</dbReference>
<dbReference type="PDBsum" id="8HKX"/>
<dbReference type="PDBsum" id="8HKY"/>
<dbReference type="PDBsum" id="8HKZ"/>
<dbReference type="PDBsum" id="8HL1"/>
<dbReference type="PDBsum" id="8HL2"/>
<dbReference type="PDBsum" id="8HL3"/>
<dbReference type="PDBsum" id="8HL4"/>
<dbReference type="PDBsum" id="8HL5"/>
<dbReference type="PDBsum" id="8WKP"/>
<dbReference type="PDBsum" id="8WQ2"/>
<dbReference type="PDBsum" id="8WQ4"/>
<dbReference type="EMDB" id="EMD-34862"/>
<dbReference type="EMDB" id="EMD-34863"/>
<dbReference type="EMDB" id="EMD-34864"/>
<dbReference type="EMDB" id="EMD-34866"/>
<dbReference type="EMDB" id="EMD-34867"/>
<dbReference type="EMDB" id="EMD-34868"/>
<dbReference type="EMDB" id="EMD-34869"/>
<dbReference type="EMDB" id="EMD-34870"/>
<dbReference type="EMDB" id="EMD-37604"/>
<dbReference type="EMDB" id="EMD-37733"/>
<dbReference type="EMDB" id="EMD-37734"/>
<dbReference type="SMR" id="O05636"/>
<dbReference type="STRING" id="330779.Saci_0582"/>
<dbReference type="GeneID" id="14551103"/>
<dbReference type="KEGG" id="sai:Saci_0582"/>
<dbReference type="PATRIC" id="fig|330779.12.peg.561"/>
<dbReference type="eggNOG" id="arCOG04091">
    <property type="taxonomic scope" value="Archaea"/>
</dbReference>
<dbReference type="HOGENOM" id="CLU_098428_1_1_2"/>
<dbReference type="Proteomes" id="UP000001018">
    <property type="component" value="Chromosome"/>
</dbReference>
<dbReference type="GO" id="GO:1990904">
    <property type="term" value="C:ribonucleoprotein complex"/>
    <property type="evidence" value="ECO:0007669"/>
    <property type="project" value="UniProtKB-KW"/>
</dbReference>
<dbReference type="GO" id="GO:0005840">
    <property type="term" value="C:ribosome"/>
    <property type="evidence" value="ECO:0007669"/>
    <property type="project" value="UniProtKB-KW"/>
</dbReference>
<dbReference type="GO" id="GO:0019843">
    <property type="term" value="F:rRNA binding"/>
    <property type="evidence" value="ECO:0007669"/>
    <property type="project" value="UniProtKB-UniRule"/>
</dbReference>
<dbReference type="GO" id="GO:0003735">
    <property type="term" value="F:structural constituent of ribosome"/>
    <property type="evidence" value="ECO:0007669"/>
    <property type="project" value="InterPro"/>
</dbReference>
<dbReference type="GO" id="GO:0006412">
    <property type="term" value="P:translation"/>
    <property type="evidence" value="ECO:0007669"/>
    <property type="project" value="UniProtKB-UniRule"/>
</dbReference>
<dbReference type="FunFam" id="3.30.1370.30:FF:000001">
    <property type="entry name" value="40S ribosomal protein S15a"/>
    <property type="match status" value="1"/>
</dbReference>
<dbReference type="Gene3D" id="3.30.1370.30">
    <property type="match status" value="1"/>
</dbReference>
<dbReference type="Gene3D" id="3.30.1490.10">
    <property type="match status" value="1"/>
</dbReference>
<dbReference type="HAMAP" id="MF_01302_A">
    <property type="entry name" value="Ribosomal_uS8_A"/>
    <property type="match status" value="1"/>
</dbReference>
<dbReference type="InterPro" id="IPR000630">
    <property type="entry name" value="Ribosomal_uS8"/>
</dbReference>
<dbReference type="InterPro" id="IPR047863">
    <property type="entry name" value="Ribosomal_uS8_CS"/>
</dbReference>
<dbReference type="InterPro" id="IPR035987">
    <property type="entry name" value="Ribosomal_uS8_sf"/>
</dbReference>
<dbReference type="NCBIfam" id="NF003115">
    <property type="entry name" value="PRK04034.1"/>
    <property type="match status" value="1"/>
</dbReference>
<dbReference type="PANTHER" id="PTHR11758">
    <property type="entry name" value="40S RIBOSOMAL PROTEIN S15A"/>
    <property type="match status" value="1"/>
</dbReference>
<dbReference type="Pfam" id="PF00410">
    <property type="entry name" value="Ribosomal_S8"/>
    <property type="match status" value="1"/>
</dbReference>
<dbReference type="SUPFAM" id="SSF56047">
    <property type="entry name" value="Ribosomal protein S8"/>
    <property type="match status" value="1"/>
</dbReference>
<dbReference type="PROSITE" id="PS00053">
    <property type="entry name" value="RIBOSOMAL_S8"/>
    <property type="match status" value="1"/>
</dbReference>
<reference key="1">
    <citation type="journal article" date="1999" name="Mol. Phylogenet. Evol.">
        <title>The structure and evolution of the ribosomal proteins encoded in the spc operon of the archaeon (Crenarchaeota) Sulfolobus acidocaldarius.</title>
        <authorList>
            <person name="Yang D."/>
            <person name="Kusser I."/>
            <person name="Koepke A.K."/>
            <person name="Koop B.F."/>
            <person name="Matheson A.T."/>
        </authorList>
    </citation>
    <scope>NUCLEOTIDE SEQUENCE [GENOMIC DNA]</scope>
    <source>
        <strain>ATCC 33909 / DSM 639 / JCM 8929 / NBRC 15157 / NCIMB 11770</strain>
    </source>
</reference>
<reference key="2">
    <citation type="journal article" date="2005" name="J. Bacteriol.">
        <title>The genome of Sulfolobus acidocaldarius, a model organism of the Crenarchaeota.</title>
        <authorList>
            <person name="Chen L."/>
            <person name="Bruegger K."/>
            <person name="Skovgaard M."/>
            <person name="Redder P."/>
            <person name="She Q."/>
            <person name="Torarinsson E."/>
            <person name="Greve B."/>
            <person name="Awayez M."/>
            <person name="Zibat A."/>
            <person name="Klenk H.-P."/>
            <person name="Garrett R.A."/>
        </authorList>
    </citation>
    <scope>NUCLEOTIDE SEQUENCE [LARGE SCALE GENOMIC DNA]</scope>
    <source>
        <strain>ATCC 33909 / DSM 639 / JCM 8929 / NBRC 15157 / NCIMB 11770</strain>
    </source>
</reference>
<name>RS8_SULAC</name>
<protein>
    <recommendedName>
        <fullName evidence="1">Small ribosomal subunit protein uS8</fullName>
    </recommendedName>
    <alternativeName>
        <fullName evidence="2">30S ribosomal protein S8</fullName>
    </alternativeName>
</protein>
<accession>O05636</accession>
<accession>Q4JB55</accession>
<proteinExistence type="evidence at protein level"/>
<organism>
    <name type="scientific">Sulfolobus acidocaldarius (strain ATCC 33909 / DSM 639 / JCM 8929 / NBRC 15157 / NCIMB 11770)</name>
    <dbReference type="NCBI Taxonomy" id="330779"/>
    <lineage>
        <taxon>Archaea</taxon>
        <taxon>Thermoproteota</taxon>
        <taxon>Thermoprotei</taxon>
        <taxon>Sulfolobales</taxon>
        <taxon>Sulfolobaceae</taxon>
        <taxon>Sulfolobus</taxon>
    </lineage>
</organism>
<evidence type="ECO:0000255" key="1">
    <source>
        <dbReference type="HAMAP-Rule" id="MF_01302"/>
    </source>
</evidence>
<evidence type="ECO:0000305" key="2"/>
<keyword id="KW-0002">3D-structure</keyword>
<keyword id="KW-1185">Reference proteome</keyword>
<keyword id="KW-0687">Ribonucleoprotein</keyword>
<keyword id="KW-0689">Ribosomal protein</keyword>
<keyword id="KW-0694">RNA-binding</keyword>
<keyword id="KW-0699">rRNA-binding</keyword>
<sequence>MPSINPLANALATLYNNEMRRNKQALITPASKLIISVLRVMQKEGYIGEFEYIDDGRAGKIIVQLLGRINKCGPISPRYPLDYNGLLRLPDYIRKYLPSKEIGIIIISTPKGVMSHRDGIREKIGGVTLGYVY</sequence>
<gene>
    <name evidence="1" type="primary">rps8</name>
    <name type="ordered locus">Saci_0582</name>
</gene>